<gene>
    <name evidence="1" type="primary">psbA</name>
</gene>
<accession>B0Z4U0</accession>
<protein>
    <recommendedName>
        <fullName evidence="1">Photosystem II protein D1</fullName>
        <shortName evidence="1">PSII D1 protein</shortName>
        <ecNumber evidence="1">1.10.3.9</ecNumber>
    </recommendedName>
    <alternativeName>
        <fullName evidence="1">Photosystem II Q(B) protein</fullName>
    </alternativeName>
</protein>
<reference key="1">
    <citation type="journal article" date="2008" name="Nucleic Acids Res.">
        <title>The complete nucleotide sequences of the five genetically distinct plastid genomes of Oenothera, subsection Oenothera: I. Sequence evaluation and plastome evolution.</title>
        <authorList>
            <person name="Greiner S."/>
            <person name="Wang X."/>
            <person name="Rauwolf U."/>
            <person name="Silber M.V."/>
            <person name="Mayer K."/>
            <person name="Meurer J."/>
            <person name="Haberer G."/>
            <person name="Herrmann R.G."/>
        </authorList>
    </citation>
    <scope>NUCLEOTIDE SEQUENCE [LARGE SCALE GENOMIC DNA]</scope>
    <source>
        <strain>cv. Suaveolens Grado</strain>
    </source>
</reference>
<name>PSBA_OENBI</name>
<dbReference type="EC" id="1.10.3.9" evidence="1"/>
<dbReference type="EMBL" id="EU262889">
    <property type="protein sequence ID" value="ABW98852.1"/>
    <property type="molecule type" value="Genomic_DNA"/>
</dbReference>
<dbReference type="RefSeq" id="YP_001687347.1">
    <property type="nucleotide sequence ID" value="NC_010361.1"/>
</dbReference>
<dbReference type="SMR" id="B0Z4U0"/>
<dbReference type="GeneID" id="5952090"/>
<dbReference type="GO" id="GO:0009535">
    <property type="term" value="C:chloroplast thylakoid membrane"/>
    <property type="evidence" value="ECO:0007669"/>
    <property type="project" value="UniProtKB-SubCell"/>
</dbReference>
<dbReference type="GO" id="GO:0009523">
    <property type="term" value="C:photosystem II"/>
    <property type="evidence" value="ECO:0007669"/>
    <property type="project" value="UniProtKB-KW"/>
</dbReference>
<dbReference type="GO" id="GO:0016168">
    <property type="term" value="F:chlorophyll binding"/>
    <property type="evidence" value="ECO:0007669"/>
    <property type="project" value="UniProtKB-UniRule"/>
</dbReference>
<dbReference type="GO" id="GO:0045156">
    <property type="term" value="F:electron transporter, transferring electrons within the cyclic electron transport pathway of photosynthesis activity"/>
    <property type="evidence" value="ECO:0007669"/>
    <property type="project" value="InterPro"/>
</dbReference>
<dbReference type="GO" id="GO:0005506">
    <property type="term" value="F:iron ion binding"/>
    <property type="evidence" value="ECO:0007669"/>
    <property type="project" value="UniProtKB-UniRule"/>
</dbReference>
<dbReference type="GO" id="GO:0016682">
    <property type="term" value="F:oxidoreductase activity, acting on diphenols and related substances as donors, oxygen as acceptor"/>
    <property type="evidence" value="ECO:0007669"/>
    <property type="project" value="UniProtKB-UniRule"/>
</dbReference>
<dbReference type="GO" id="GO:0010242">
    <property type="term" value="F:oxygen evolving activity"/>
    <property type="evidence" value="ECO:0007669"/>
    <property type="project" value="UniProtKB-EC"/>
</dbReference>
<dbReference type="GO" id="GO:0009772">
    <property type="term" value="P:photosynthetic electron transport in photosystem II"/>
    <property type="evidence" value="ECO:0007669"/>
    <property type="project" value="InterPro"/>
</dbReference>
<dbReference type="GO" id="GO:0009635">
    <property type="term" value="P:response to herbicide"/>
    <property type="evidence" value="ECO:0007669"/>
    <property type="project" value="UniProtKB-KW"/>
</dbReference>
<dbReference type="CDD" id="cd09289">
    <property type="entry name" value="Photosystem-II_D1"/>
    <property type="match status" value="1"/>
</dbReference>
<dbReference type="FunFam" id="1.20.85.10:FF:000002">
    <property type="entry name" value="Photosystem II protein D1"/>
    <property type="match status" value="1"/>
</dbReference>
<dbReference type="Gene3D" id="1.20.85.10">
    <property type="entry name" value="Photosystem II protein D1-like"/>
    <property type="match status" value="1"/>
</dbReference>
<dbReference type="HAMAP" id="MF_01379">
    <property type="entry name" value="PSII_PsbA_D1"/>
    <property type="match status" value="1"/>
</dbReference>
<dbReference type="InterPro" id="IPR055266">
    <property type="entry name" value="D1/D2"/>
</dbReference>
<dbReference type="InterPro" id="IPR036854">
    <property type="entry name" value="Photo_II_D1/D2_sf"/>
</dbReference>
<dbReference type="InterPro" id="IPR000484">
    <property type="entry name" value="Photo_RC_L/M"/>
</dbReference>
<dbReference type="InterPro" id="IPR055265">
    <property type="entry name" value="Photo_RC_L/M_CS"/>
</dbReference>
<dbReference type="InterPro" id="IPR005867">
    <property type="entry name" value="PSII_D1"/>
</dbReference>
<dbReference type="NCBIfam" id="TIGR01151">
    <property type="entry name" value="psbA"/>
    <property type="match status" value="1"/>
</dbReference>
<dbReference type="PANTHER" id="PTHR33149:SF12">
    <property type="entry name" value="PHOTOSYSTEM II D2 PROTEIN"/>
    <property type="match status" value="1"/>
</dbReference>
<dbReference type="PANTHER" id="PTHR33149">
    <property type="entry name" value="PHOTOSYSTEM II PROTEIN D1"/>
    <property type="match status" value="1"/>
</dbReference>
<dbReference type="Pfam" id="PF00124">
    <property type="entry name" value="Photo_RC"/>
    <property type="match status" value="1"/>
</dbReference>
<dbReference type="PRINTS" id="PR00256">
    <property type="entry name" value="REACTNCENTRE"/>
</dbReference>
<dbReference type="SUPFAM" id="SSF81483">
    <property type="entry name" value="Bacterial photosystem II reaction centre, L and M subunits"/>
    <property type="match status" value="1"/>
</dbReference>
<dbReference type="PROSITE" id="PS00244">
    <property type="entry name" value="REACTION_CENTER"/>
    <property type="match status" value="1"/>
</dbReference>
<organism>
    <name type="scientific">Oenothera biennis</name>
    <name type="common">German evening primrose</name>
    <name type="synonym">Onagra biennis</name>
    <dbReference type="NCBI Taxonomy" id="3942"/>
    <lineage>
        <taxon>Eukaryota</taxon>
        <taxon>Viridiplantae</taxon>
        <taxon>Streptophyta</taxon>
        <taxon>Embryophyta</taxon>
        <taxon>Tracheophyta</taxon>
        <taxon>Spermatophyta</taxon>
        <taxon>Magnoliopsida</taxon>
        <taxon>eudicotyledons</taxon>
        <taxon>Gunneridae</taxon>
        <taxon>Pentapetalae</taxon>
        <taxon>rosids</taxon>
        <taxon>malvids</taxon>
        <taxon>Myrtales</taxon>
        <taxon>Onagraceae</taxon>
        <taxon>Onagroideae</taxon>
        <taxon>Onagreae</taxon>
        <taxon>Oenothera</taxon>
    </lineage>
</organism>
<proteinExistence type="inferred from homology"/>
<evidence type="ECO:0000255" key="1">
    <source>
        <dbReference type="HAMAP-Rule" id="MF_01379"/>
    </source>
</evidence>
<geneLocation type="chloroplast"/>
<sequence length="353" mass="38937">MTAILERRESESLWGRFCNWITSTENRLYIGWFGVLMIPTLLTATSVFIIAFIAAPPVDIDGIREPVSGSLLYGNNIISGAIIPTSAAIGLHFYPIWEAASVDEWLYNGGPYELIVLHFLLGVACYMGREWELSFRLGMRPWIAVAYSAPVAAATAVFLIYPIGQGSFSDGMPLGISGTFNFMIVFQAEHNILMHPFHMLGVAGVFGGSLFSAMHGSLVTSSLIRETTENESANEGYRFGQEEETYNIVAAHGYFGRLIFQYASFNNSRSLHFFLAAWPVVGIWFTALGISTMAFNLNGFNFNQSVVDSQGRVINTWADIINRANLGMEVMHERNAHNFPLDLAAVEAPSTNG</sequence>
<keyword id="KW-0007">Acetylation</keyword>
<keyword id="KW-0106">Calcium</keyword>
<keyword id="KW-0148">Chlorophyll</keyword>
<keyword id="KW-0150">Chloroplast</keyword>
<keyword id="KW-0157">Chromophore</keyword>
<keyword id="KW-0249">Electron transport</keyword>
<keyword id="KW-0359">Herbicide resistance</keyword>
<keyword id="KW-0408">Iron</keyword>
<keyword id="KW-0460">Magnesium</keyword>
<keyword id="KW-0464">Manganese</keyword>
<keyword id="KW-0472">Membrane</keyword>
<keyword id="KW-0479">Metal-binding</keyword>
<keyword id="KW-0560">Oxidoreductase</keyword>
<keyword id="KW-0597">Phosphoprotein</keyword>
<keyword id="KW-0602">Photosynthesis</keyword>
<keyword id="KW-0604">Photosystem II</keyword>
<keyword id="KW-0934">Plastid</keyword>
<keyword id="KW-0793">Thylakoid</keyword>
<keyword id="KW-0812">Transmembrane</keyword>
<keyword id="KW-1133">Transmembrane helix</keyword>
<keyword id="KW-0813">Transport</keyword>
<comment type="function">
    <text evidence="1">Photosystem II (PSII) is a light-driven water:plastoquinone oxidoreductase that uses light energy to abstract electrons from H(2)O, generating O(2) and a proton gradient subsequently used for ATP formation. It consists of a core antenna complex that captures photons, and an electron transfer chain that converts photonic excitation into a charge separation. The D1/D2 (PsbA/PsbD) reaction center heterodimer binds P680, the primary electron donor of PSII as well as several subsequent electron acceptors.</text>
</comment>
<comment type="catalytic activity">
    <reaction evidence="1">
        <text>2 a plastoquinone + 4 hnu + 2 H2O = 2 a plastoquinol + O2</text>
        <dbReference type="Rhea" id="RHEA:36359"/>
        <dbReference type="Rhea" id="RHEA-COMP:9561"/>
        <dbReference type="Rhea" id="RHEA-COMP:9562"/>
        <dbReference type="ChEBI" id="CHEBI:15377"/>
        <dbReference type="ChEBI" id="CHEBI:15379"/>
        <dbReference type="ChEBI" id="CHEBI:17757"/>
        <dbReference type="ChEBI" id="CHEBI:30212"/>
        <dbReference type="ChEBI" id="CHEBI:62192"/>
        <dbReference type="EC" id="1.10.3.9"/>
    </reaction>
</comment>
<comment type="cofactor">
    <text evidence="1">The D1/D2 heterodimer binds P680, chlorophylls that are the primary electron donor of PSII, and subsequent electron acceptors. It shares a non-heme iron and each subunit binds pheophytin, quinone, additional chlorophylls, carotenoids and lipids. D1 provides most of the ligands for the Mn4-Ca-O5 cluster of the oxygen-evolving complex (OEC). There is also a Cl(-1) ion associated with D1 and D2, which is required for oxygen evolution. The PSII complex binds additional chlorophylls, carotenoids and specific lipids.</text>
</comment>
<comment type="subunit">
    <text evidence="1">PSII is composed of 1 copy each of membrane proteins PsbA, PsbB, PsbC, PsbD, PsbE, PsbF, PsbH, PsbI, PsbJ, PsbK, PsbL, PsbM, PsbT, PsbX, PsbY, PsbZ, Psb30/Ycf12, at least 3 peripheral proteins of the oxygen-evolving complex and a large number of cofactors. It forms dimeric complexes.</text>
</comment>
<comment type="subcellular location">
    <subcellularLocation>
        <location evidence="1">Plastid</location>
        <location evidence="1">Chloroplast thylakoid membrane</location>
        <topology evidence="1">Multi-pass membrane protein</topology>
    </subcellularLocation>
</comment>
<comment type="PTM">
    <text evidence="1">Tyr-161 forms a radical intermediate that is referred to as redox-active TyrZ, YZ or Y-Z.</text>
</comment>
<comment type="PTM">
    <text evidence="1">C-terminally processed by CTPA; processing is essential to allow assembly of the oxygen-evolving complex and thus photosynthetic growth.</text>
</comment>
<comment type="miscellaneous">
    <text evidence="1">2 of the reaction center chlorophylls (ChlD1 and ChlD2) are entirely coordinated by water.</text>
</comment>
<comment type="miscellaneous">
    <text evidence="1">Herbicides such as atrazine, BNT, diuron or ioxynil bind in the Q(B) binding site and block subsequent electron transfer.</text>
</comment>
<comment type="similarity">
    <text evidence="1">Belongs to the reaction center PufL/M/PsbA/D family.</text>
</comment>
<feature type="initiator methionine" description="Removed" evidence="1">
    <location>
        <position position="1"/>
    </location>
</feature>
<feature type="chain" id="PRO_0000340034" description="Photosystem II protein D1" evidence="1">
    <location>
        <begin position="2"/>
        <end position="344"/>
    </location>
</feature>
<feature type="propeptide" id="PRO_0000340035" evidence="1">
    <location>
        <begin position="345"/>
        <end position="353"/>
    </location>
</feature>
<feature type="transmembrane region" description="Helical" evidence="1">
    <location>
        <begin position="29"/>
        <end position="46"/>
    </location>
</feature>
<feature type="transmembrane region" description="Helical" evidence="1">
    <location>
        <begin position="118"/>
        <end position="133"/>
    </location>
</feature>
<feature type="transmembrane region" description="Helical" evidence="1">
    <location>
        <begin position="142"/>
        <end position="156"/>
    </location>
</feature>
<feature type="transmembrane region" description="Helical" evidence="1">
    <location>
        <begin position="197"/>
        <end position="218"/>
    </location>
</feature>
<feature type="transmembrane region" description="Helical" evidence="1">
    <location>
        <begin position="274"/>
        <end position="288"/>
    </location>
</feature>
<feature type="binding site" description="axial binding residue" evidence="1">
    <location>
        <position position="118"/>
    </location>
    <ligand>
        <name>chlorophyll a</name>
        <dbReference type="ChEBI" id="CHEBI:58416"/>
        <label>ChlzD1</label>
    </ligand>
    <ligandPart>
        <name>Mg</name>
        <dbReference type="ChEBI" id="CHEBI:25107"/>
    </ligandPart>
</feature>
<feature type="binding site" evidence="1">
    <location>
        <position position="126"/>
    </location>
    <ligand>
        <name>pheophytin a</name>
        <dbReference type="ChEBI" id="CHEBI:136840"/>
        <label>D1</label>
    </ligand>
</feature>
<feature type="binding site" evidence="1">
    <location>
        <position position="170"/>
    </location>
    <ligand>
        <name>[CaMn4O5] cluster</name>
        <dbReference type="ChEBI" id="CHEBI:189552"/>
    </ligand>
</feature>
<feature type="binding site" evidence="1">
    <location>
        <position position="189"/>
    </location>
    <ligand>
        <name>[CaMn4O5] cluster</name>
        <dbReference type="ChEBI" id="CHEBI:189552"/>
    </ligand>
</feature>
<feature type="binding site" description="axial binding residue" evidence="1">
    <location>
        <position position="198"/>
    </location>
    <ligand>
        <name>chlorophyll a</name>
        <dbReference type="ChEBI" id="CHEBI:58416"/>
        <label>PD1</label>
    </ligand>
    <ligandPart>
        <name>Mg</name>
        <dbReference type="ChEBI" id="CHEBI:25107"/>
    </ligandPart>
</feature>
<feature type="binding site" evidence="1">
    <location>
        <position position="215"/>
    </location>
    <ligand>
        <name>a quinone</name>
        <dbReference type="ChEBI" id="CHEBI:132124"/>
        <label>B</label>
    </ligand>
</feature>
<feature type="binding site" evidence="1">
    <location>
        <position position="215"/>
    </location>
    <ligand>
        <name>Fe cation</name>
        <dbReference type="ChEBI" id="CHEBI:24875"/>
        <note>ligand shared with heterodimeric partner</note>
    </ligand>
</feature>
<feature type="binding site" evidence="1">
    <location>
        <begin position="264"/>
        <end position="265"/>
    </location>
    <ligand>
        <name>a quinone</name>
        <dbReference type="ChEBI" id="CHEBI:132124"/>
        <label>B</label>
    </ligand>
</feature>
<feature type="binding site" evidence="1">
    <location>
        <position position="272"/>
    </location>
    <ligand>
        <name>Fe cation</name>
        <dbReference type="ChEBI" id="CHEBI:24875"/>
        <note>ligand shared with heterodimeric partner</note>
    </ligand>
</feature>
<feature type="binding site" evidence="1">
    <location>
        <position position="332"/>
    </location>
    <ligand>
        <name>[CaMn4O5] cluster</name>
        <dbReference type="ChEBI" id="CHEBI:189552"/>
    </ligand>
</feature>
<feature type="binding site" evidence="1">
    <location>
        <position position="333"/>
    </location>
    <ligand>
        <name>[CaMn4O5] cluster</name>
        <dbReference type="ChEBI" id="CHEBI:189552"/>
    </ligand>
</feature>
<feature type="binding site" evidence="1">
    <location>
        <position position="342"/>
    </location>
    <ligand>
        <name>[CaMn4O5] cluster</name>
        <dbReference type="ChEBI" id="CHEBI:189552"/>
    </ligand>
</feature>
<feature type="binding site" evidence="1">
    <location>
        <position position="344"/>
    </location>
    <ligand>
        <name>[CaMn4O5] cluster</name>
        <dbReference type="ChEBI" id="CHEBI:189552"/>
    </ligand>
</feature>
<feature type="site" description="Tyrosine radical intermediate" evidence="1">
    <location>
        <position position="161"/>
    </location>
</feature>
<feature type="site" description="Stabilizes free radical intermediate" evidence="1">
    <location>
        <position position="190"/>
    </location>
</feature>
<feature type="site" description="Cleavage; by CTPA" evidence="1">
    <location>
        <begin position="344"/>
        <end position="345"/>
    </location>
</feature>
<feature type="modified residue" description="N-acetylthreonine" evidence="1">
    <location>
        <position position="2"/>
    </location>
</feature>
<feature type="modified residue" description="Phosphothreonine" evidence="1">
    <location>
        <position position="2"/>
    </location>
</feature>